<accession>A8GMP8</accession>
<protein>
    <recommendedName>
        <fullName evidence="2">D-alanine--D-alanine ligase</fullName>
        <ecNumber evidence="2">6.3.2.4</ecNumber>
    </recommendedName>
    <alternativeName>
        <fullName evidence="2">D-Ala-D-Ala ligase</fullName>
    </alternativeName>
    <alternativeName>
        <fullName evidence="2">D-alanylalanine synthetase</fullName>
    </alternativeName>
</protein>
<evidence type="ECO:0000250" key="1"/>
<evidence type="ECO:0000255" key="2">
    <source>
        <dbReference type="HAMAP-Rule" id="MF_00047"/>
    </source>
</evidence>
<dbReference type="EC" id="6.3.2.4" evidence="2"/>
<dbReference type="EMBL" id="CP000847">
    <property type="protein sequence ID" value="ABV74673.1"/>
    <property type="molecule type" value="Genomic_DNA"/>
</dbReference>
<dbReference type="RefSeq" id="WP_012149307.1">
    <property type="nucleotide sequence ID" value="NC_009881.1"/>
</dbReference>
<dbReference type="SMR" id="A8GMP8"/>
<dbReference type="STRING" id="293614.A1C_01810"/>
<dbReference type="KEGG" id="rak:A1C_01810"/>
<dbReference type="eggNOG" id="COG1181">
    <property type="taxonomic scope" value="Bacteria"/>
</dbReference>
<dbReference type="HOGENOM" id="CLU_039268_1_1_5"/>
<dbReference type="UniPathway" id="UPA00219"/>
<dbReference type="Proteomes" id="UP000006830">
    <property type="component" value="Chromosome"/>
</dbReference>
<dbReference type="GO" id="GO:0005737">
    <property type="term" value="C:cytoplasm"/>
    <property type="evidence" value="ECO:0007669"/>
    <property type="project" value="UniProtKB-SubCell"/>
</dbReference>
<dbReference type="GO" id="GO:0005524">
    <property type="term" value="F:ATP binding"/>
    <property type="evidence" value="ECO:0007669"/>
    <property type="project" value="UniProtKB-KW"/>
</dbReference>
<dbReference type="GO" id="GO:0008716">
    <property type="term" value="F:D-alanine-D-alanine ligase activity"/>
    <property type="evidence" value="ECO:0007669"/>
    <property type="project" value="UniProtKB-UniRule"/>
</dbReference>
<dbReference type="GO" id="GO:0046872">
    <property type="term" value="F:metal ion binding"/>
    <property type="evidence" value="ECO:0007669"/>
    <property type="project" value="UniProtKB-KW"/>
</dbReference>
<dbReference type="GO" id="GO:0071555">
    <property type="term" value="P:cell wall organization"/>
    <property type="evidence" value="ECO:0007669"/>
    <property type="project" value="UniProtKB-KW"/>
</dbReference>
<dbReference type="GO" id="GO:0009252">
    <property type="term" value="P:peptidoglycan biosynthetic process"/>
    <property type="evidence" value="ECO:0007669"/>
    <property type="project" value="UniProtKB-UniRule"/>
</dbReference>
<dbReference type="GO" id="GO:0008360">
    <property type="term" value="P:regulation of cell shape"/>
    <property type="evidence" value="ECO:0007669"/>
    <property type="project" value="UniProtKB-KW"/>
</dbReference>
<dbReference type="Gene3D" id="3.40.50.20">
    <property type="match status" value="1"/>
</dbReference>
<dbReference type="Gene3D" id="3.30.1490.20">
    <property type="entry name" value="ATP-grasp fold, A domain"/>
    <property type="match status" value="1"/>
</dbReference>
<dbReference type="Gene3D" id="3.30.470.20">
    <property type="entry name" value="ATP-grasp fold, B domain"/>
    <property type="match status" value="1"/>
</dbReference>
<dbReference type="HAMAP" id="MF_00047">
    <property type="entry name" value="Dala_Dala_lig"/>
    <property type="match status" value="1"/>
</dbReference>
<dbReference type="InterPro" id="IPR011761">
    <property type="entry name" value="ATP-grasp"/>
</dbReference>
<dbReference type="InterPro" id="IPR013815">
    <property type="entry name" value="ATP_grasp_subdomain_1"/>
</dbReference>
<dbReference type="InterPro" id="IPR000291">
    <property type="entry name" value="D-Ala_lig_Van_CS"/>
</dbReference>
<dbReference type="InterPro" id="IPR005905">
    <property type="entry name" value="D_ala_D_ala"/>
</dbReference>
<dbReference type="InterPro" id="IPR011095">
    <property type="entry name" value="Dala_Dala_lig_C"/>
</dbReference>
<dbReference type="InterPro" id="IPR011127">
    <property type="entry name" value="Dala_Dala_lig_N"/>
</dbReference>
<dbReference type="InterPro" id="IPR016185">
    <property type="entry name" value="PreATP-grasp_dom_sf"/>
</dbReference>
<dbReference type="NCBIfam" id="TIGR01205">
    <property type="entry name" value="D_ala_D_alaTIGR"/>
    <property type="match status" value="1"/>
</dbReference>
<dbReference type="NCBIfam" id="NF002378">
    <property type="entry name" value="PRK01372.1"/>
    <property type="match status" value="1"/>
</dbReference>
<dbReference type="PANTHER" id="PTHR23132">
    <property type="entry name" value="D-ALANINE--D-ALANINE LIGASE"/>
    <property type="match status" value="1"/>
</dbReference>
<dbReference type="PANTHER" id="PTHR23132:SF23">
    <property type="entry name" value="D-ALANINE--D-ALANINE LIGASE B"/>
    <property type="match status" value="1"/>
</dbReference>
<dbReference type="Pfam" id="PF07478">
    <property type="entry name" value="Dala_Dala_lig_C"/>
    <property type="match status" value="1"/>
</dbReference>
<dbReference type="Pfam" id="PF01820">
    <property type="entry name" value="Dala_Dala_lig_N"/>
    <property type="match status" value="1"/>
</dbReference>
<dbReference type="PIRSF" id="PIRSF039102">
    <property type="entry name" value="Ddl/VanB"/>
    <property type="match status" value="1"/>
</dbReference>
<dbReference type="SUPFAM" id="SSF56059">
    <property type="entry name" value="Glutathione synthetase ATP-binding domain-like"/>
    <property type="match status" value="1"/>
</dbReference>
<dbReference type="SUPFAM" id="SSF52440">
    <property type="entry name" value="PreATP-grasp domain"/>
    <property type="match status" value="1"/>
</dbReference>
<dbReference type="PROSITE" id="PS50975">
    <property type="entry name" value="ATP_GRASP"/>
    <property type="match status" value="1"/>
</dbReference>
<dbReference type="PROSITE" id="PS00843">
    <property type="entry name" value="DALA_DALA_LIGASE_1"/>
    <property type="match status" value="1"/>
</dbReference>
<dbReference type="PROSITE" id="PS00844">
    <property type="entry name" value="DALA_DALA_LIGASE_2"/>
    <property type="match status" value="1"/>
</dbReference>
<feature type="chain" id="PRO_0000341169" description="D-alanine--D-alanine ligase">
    <location>
        <begin position="1"/>
        <end position="320"/>
    </location>
</feature>
<feature type="domain" description="ATP-grasp" evidence="2">
    <location>
        <begin position="120"/>
        <end position="314"/>
    </location>
</feature>
<feature type="binding site" evidence="2">
    <location>
        <begin position="147"/>
        <end position="198"/>
    </location>
    <ligand>
        <name>ATP</name>
        <dbReference type="ChEBI" id="CHEBI:30616"/>
    </ligand>
</feature>
<feature type="binding site" evidence="2">
    <location>
        <position position="267"/>
    </location>
    <ligand>
        <name>Mg(2+)</name>
        <dbReference type="ChEBI" id="CHEBI:18420"/>
        <label>1</label>
    </ligand>
</feature>
<feature type="binding site" evidence="2">
    <location>
        <position position="281"/>
    </location>
    <ligand>
        <name>Mg(2+)</name>
        <dbReference type="ChEBI" id="CHEBI:18420"/>
        <label>1</label>
    </ligand>
</feature>
<feature type="binding site" evidence="2">
    <location>
        <position position="281"/>
    </location>
    <ligand>
        <name>Mg(2+)</name>
        <dbReference type="ChEBI" id="CHEBI:18420"/>
        <label>2</label>
    </ligand>
</feature>
<feature type="binding site" evidence="2">
    <location>
        <position position="283"/>
    </location>
    <ligand>
        <name>Mg(2+)</name>
        <dbReference type="ChEBI" id="CHEBI:18420"/>
        <label>2</label>
    </ligand>
</feature>
<reference key="1">
    <citation type="submission" date="2007-09" db="EMBL/GenBank/DDBJ databases">
        <title>Complete genome sequence of Rickettsia akari.</title>
        <authorList>
            <person name="Madan A."/>
            <person name="Fahey J."/>
            <person name="Helton E."/>
            <person name="Ketteman M."/>
            <person name="Madan A."/>
            <person name="Rodrigues S."/>
            <person name="Sanchez A."/>
            <person name="Whiting M."/>
            <person name="Dasch G."/>
            <person name="Eremeeva M."/>
        </authorList>
    </citation>
    <scope>NUCLEOTIDE SEQUENCE [LARGE SCALE GENOMIC DNA]</scope>
    <source>
        <strain>Hartford</strain>
    </source>
</reference>
<comment type="function">
    <text evidence="2">Cell wall formation.</text>
</comment>
<comment type="catalytic activity">
    <reaction evidence="2">
        <text>2 D-alanine + ATP = D-alanyl-D-alanine + ADP + phosphate + H(+)</text>
        <dbReference type="Rhea" id="RHEA:11224"/>
        <dbReference type="ChEBI" id="CHEBI:15378"/>
        <dbReference type="ChEBI" id="CHEBI:30616"/>
        <dbReference type="ChEBI" id="CHEBI:43474"/>
        <dbReference type="ChEBI" id="CHEBI:57416"/>
        <dbReference type="ChEBI" id="CHEBI:57822"/>
        <dbReference type="ChEBI" id="CHEBI:456216"/>
        <dbReference type="EC" id="6.3.2.4"/>
    </reaction>
</comment>
<comment type="cofactor">
    <cofactor evidence="1">
        <name>Mg(2+)</name>
        <dbReference type="ChEBI" id="CHEBI:18420"/>
    </cofactor>
    <cofactor evidence="1">
        <name>Mn(2+)</name>
        <dbReference type="ChEBI" id="CHEBI:29035"/>
    </cofactor>
    <text evidence="1">Binds 2 magnesium or manganese ions per subunit.</text>
</comment>
<comment type="pathway">
    <text evidence="2">Cell wall biogenesis; peptidoglycan biosynthesis.</text>
</comment>
<comment type="subcellular location">
    <subcellularLocation>
        <location evidence="2">Cytoplasm</location>
    </subcellularLocation>
</comment>
<comment type="similarity">
    <text evidence="2">Belongs to the D-alanine--D-alanine ligase family.</text>
</comment>
<sequence length="320" mass="35666">MQYQTHWIEHSVVKILSTTGKNHIALVAGGMSAEREVSLVSSEGVQQALIALGYKVTFIDMGADIAVKLQEIKPDIVFNCLHGTYGEDGCLPGLLNIMRIPYTHSGVLSSALAFNKIHSSSWFFANSINTAESIVVSKSYNINTDPMKRPYVIKPLTQGSSIGVEVIFEEDDFNFADYDFPYGDQVVIERYIKGREFQVAVLNSKALGALEIKLIKNRFYDYETKYTEGFAEHLCPAPLHANLYEKLLIESEKIYKTMNCKGPARAEFILEEQTNKLYALEINTHPGMTPLSIVPEIAAYAGINFTNLIAEIIKTASFES</sequence>
<name>DDL_RICAH</name>
<proteinExistence type="inferred from homology"/>
<gene>
    <name evidence="2" type="primary">ddl</name>
    <name type="ordered locus">A1C_01810</name>
</gene>
<keyword id="KW-0067">ATP-binding</keyword>
<keyword id="KW-0133">Cell shape</keyword>
<keyword id="KW-0961">Cell wall biogenesis/degradation</keyword>
<keyword id="KW-0963">Cytoplasm</keyword>
<keyword id="KW-0436">Ligase</keyword>
<keyword id="KW-0460">Magnesium</keyword>
<keyword id="KW-0464">Manganese</keyword>
<keyword id="KW-0479">Metal-binding</keyword>
<keyword id="KW-0547">Nucleotide-binding</keyword>
<keyword id="KW-0573">Peptidoglycan synthesis</keyword>
<organism>
    <name type="scientific">Rickettsia akari (strain Hartford)</name>
    <dbReference type="NCBI Taxonomy" id="293614"/>
    <lineage>
        <taxon>Bacteria</taxon>
        <taxon>Pseudomonadati</taxon>
        <taxon>Pseudomonadota</taxon>
        <taxon>Alphaproteobacteria</taxon>
        <taxon>Rickettsiales</taxon>
        <taxon>Rickettsiaceae</taxon>
        <taxon>Rickettsieae</taxon>
        <taxon>Rickettsia</taxon>
        <taxon>spotted fever group</taxon>
    </lineage>
</organism>